<protein>
    <recommendedName>
        <fullName>Periviscerokinin-2.2</fullName>
    </recommendedName>
    <alternativeName>
        <fullName>Lem-PVK-2-like peptide</fullName>
    </alternativeName>
    <alternativeName>
        <fullName>Periviscerokinin-2</fullName>
        <shortName>PerFu-PVK-2</shortName>
    </alternativeName>
</protein>
<feature type="peptide" id="PRO_0000044275" description="Periviscerokinin-2.2">
    <location>
        <begin position="1"/>
        <end position="11"/>
    </location>
</feature>
<feature type="modified residue" description="Valine amide" evidence="2 3">
    <location>
        <position position="11"/>
    </location>
</feature>
<organism>
    <name type="scientific">Periplaneta fuliginosa</name>
    <name type="common">Smokybrown cockroach</name>
    <name type="synonym">Dusky-brown cockroach</name>
    <dbReference type="NCBI Taxonomy" id="36977"/>
    <lineage>
        <taxon>Eukaryota</taxon>
        <taxon>Metazoa</taxon>
        <taxon>Ecdysozoa</taxon>
        <taxon>Arthropoda</taxon>
        <taxon>Hexapoda</taxon>
        <taxon>Insecta</taxon>
        <taxon>Pterygota</taxon>
        <taxon>Neoptera</taxon>
        <taxon>Polyneoptera</taxon>
        <taxon>Dictyoptera</taxon>
        <taxon>Blattodea</taxon>
        <taxon>Blattoidea</taxon>
        <taxon>Blattidae</taxon>
        <taxon>Blattinae</taxon>
        <taxon>Periplaneta</taxon>
    </lineage>
</organism>
<keyword id="KW-0027">Amidation</keyword>
<keyword id="KW-0903">Direct protein sequencing</keyword>
<keyword id="KW-0527">Neuropeptide</keyword>
<keyword id="KW-0964">Secreted</keyword>
<sequence>GSSGLISMPRV</sequence>
<evidence type="ECO:0000255" key="1"/>
<evidence type="ECO:0000269" key="2">
    <source>
    </source>
</evidence>
<evidence type="ECO:0000269" key="3">
    <source>
    </source>
</evidence>
<evidence type="ECO:0000305" key="4"/>
<comment type="function">
    <text evidence="4">Mediates visceral muscle contractile activity (myotropic activity).</text>
</comment>
<comment type="subcellular location">
    <subcellularLocation>
        <location evidence="4">Secreted</location>
    </subcellularLocation>
</comment>
<comment type="mass spectrometry"/>
<comment type="similarity">
    <text evidence="1">Belongs to the periviscerokinin family.</text>
</comment>
<dbReference type="GO" id="GO:0005576">
    <property type="term" value="C:extracellular region"/>
    <property type="evidence" value="ECO:0007669"/>
    <property type="project" value="UniProtKB-SubCell"/>
</dbReference>
<dbReference type="GO" id="GO:0007218">
    <property type="term" value="P:neuropeptide signaling pathway"/>
    <property type="evidence" value="ECO:0007669"/>
    <property type="project" value="UniProtKB-KW"/>
</dbReference>
<dbReference type="InterPro" id="IPR013231">
    <property type="entry name" value="Periviscerokinin"/>
</dbReference>
<dbReference type="Pfam" id="PF08259">
    <property type="entry name" value="Periviscerokin"/>
    <property type="match status" value="1"/>
</dbReference>
<reference evidence="4" key="1">
    <citation type="journal article" date="2005" name="Peptides">
        <title>Peptidomics of neurohemal organs from species of the cockroach family Blattidae: how do neuropeptides of closely related species differ?</title>
        <authorList>
            <person name="Predel R."/>
            <person name="Gaede G."/>
        </authorList>
    </citation>
    <scope>PROTEIN SEQUENCE</scope>
    <scope>MASS SPECTROMETRY</scope>
    <scope>AMIDATION AT VAL-11</scope>
    <source>
        <tissue evidence="2">Abdominal perisympathetic organs</tissue>
    </source>
</reference>
<reference key="2">
    <citation type="journal article" date="2009" name="BMC Evol. Biol.">
        <title>A proteomic approach for studying insect phylogeny: CAPA peptides of ancient insect taxa (Dictyoptera, Blattoptera) as a test case.</title>
        <authorList>
            <person name="Roth S."/>
            <person name="Fromm B."/>
            <person name="Gaede G."/>
            <person name="Predel R."/>
        </authorList>
    </citation>
    <scope>PROTEIN SEQUENCE</scope>
    <scope>AMIDATION AT VAL-11</scope>
    <source>
        <tissue>Abdominal perisympathetic organs</tissue>
    </source>
</reference>
<proteinExistence type="evidence at protein level"/>
<accession>P84425</accession>
<name>PVK22_PERFU</name>